<keyword id="KW-0165">Cleavage on pair of basic residues</keyword>
<keyword id="KW-0202">Cytokine</keyword>
<keyword id="KW-0217">Developmental protein</keyword>
<keyword id="KW-1015">Disulfide bond</keyword>
<keyword id="KW-0325">Glycoprotein</keyword>
<keyword id="KW-0339">Growth factor</keyword>
<keyword id="KW-1185">Reference proteome</keyword>
<keyword id="KW-0964">Secreted</keyword>
<keyword id="KW-0732">Signal</keyword>
<organism>
    <name type="scientific">Xenopus laevis</name>
    <name type="common">African clawed frog</name>
    <dbReference type="NCBI Taxonomy" id="8355"/>
    <lineage>
        <taxon>Eukaryota</taxon>
        <taxon>Metazoa</taxon>
        <taxon>Chordata</taxon>
        <taxon>Craniata</taxon>
        <taxon>Vertebrata</taxon>
        <taxon>Euteleostomi</taxon>
        <taxon>Amphibia</taxon>
        <taxon>Batrachia</taxon>
        <taxon>Anura</taxon>
        <taxon>Pipoidea</taxon>
        <taxon>Pipidae</taxon>
        <taxon>Xenopodinae</taxon>
        <taxon>Xenopus</taxon>
        <taxon>Xenopus</taxon>
    </lineage>
</organism>
<evidence type="ECO:0000250" key="1"/>
<evidence type="ECO:0000250" key="2">
    <source>
        <dbReference type="UniProtKB" id="P43021"/>
    </source>
</evidence>
<evidence type="ECO:0000255" key="3"/>
<evidence type="ECO:0000256" key="4">
    <source>
        <dbReference type="SAM" id="MobiDB-lite"/>
    </source>
</evidence>
<evidence type="ECO:0000269" key="5">
    <source>
    </source>
</evidence>
<evidence type="ECO:0000269" key="6">
    <source>
    </source>
</evidence>
<evidence type="ECO:0000269" key="7">
    <source>
    </source>
</evidence>
<evidence type="ECO:0000269" key="8">
    <source>
    </source>
</evidence>
<evidence type="ECO:0000269" key="9">
    <source>
    </source>
</evidence>
<evidence type="ECO:0000269" key="10">
    <source>
    </source>
</evidence>
<evidence type="ECO:0000269" key="11">
    <source>
    </source>
</evidence>
<evidence type="ECO:0000269" key="12">
    <source>
    </source>
</evidence>
<evidence type="ECO:0000269" key="13">
    <source>
    </source>
</evidence>
<evidence type="ECO:0000269" key="14">
    <source>
    </source>
</evidence>
<evidence type="ECO:0000269" key="15">
    <source>
    </source>
</evidence>
<evidence type="ECO:0000269" key="16">
    <source>
    </source>
</evidence>
<evidence type="ECO:0000303" key="17">
    <source>
    </source>
</evidence>
<evidence type="ECO:0000305" key="18"/>
<evidence type="ECO:0000312" key="19">
    <source>
        <dbReference type="EMBL" id="AAA97392.1"/>
    </source>
</evidence>
<evidence type="ECO:0000312" key="20">
    <source>
        <dbReference type="EMBL" id="AAL05845.1"/>
    </source>
</evidence>
<accession>Q91619</accession>
<accession>Q90XB4</accession>
<accession>Q90XB5</accession>
<reference evidence="18 19" key="1">
    <citation type="journal article" date="1995" name="Development">
        <title>Nodal-related signals induce axial mesoderm and dorsalize mesoderm during gastrulation.</title>
        <authorList>
            <person name="Jones C.M."/>
            <person name="Kuehn M.R."/>
            <person name="Hogan B.L.M."/>
            <person name="Smith J.C."/>
            <person name="Wright C.V.E."/>
        </authorList>
    </citation>
    <scope>NUCLEOTIDE SEQUENCE [MRNA]</scope>
    <scope>FUNCTION</scope>
    <scope>TISSUE SPECIFICITY</scope>
    <scope>DEVELOPMENTAL STAGE</scope>
    <scope>INDUCTION</scope>
    <source>
        <tissue evidence="15">Gastrula</tissue>
    </source>
</reference>
<reference evidence="18 20" key="2">
    <citation type="journal article" date="2002" name="Int. J. Dev. Biol.">
        <title>Multiple interactions between maternally-activated signalling pathways control Xenopus nodal-related genes.</title>
        <authorList>
            <person name="Rex M."/>
            <person name="Hilton E."/>
            <person name="Old R.W."/>
        </authorList>
    </citation>
    <scope>NUCLEOTIDE SEQUENCE [GENOMIC DNA] OF 1-35 AND 56-126</scope>
    <scope>INDUCTION</scope>
</reference>
<reference evidence="18" key="3">
    <citation type="journal article" date="1997" name="Development">
        <title>Functional differences among Xenopus nodal-related genes in left-right axis determination.</title>
        <authorList>
            <person name="Sampath K."/>
            <person name="Cheng A.M.S."/>
            <person name="Frisch A."/>
            <person name="Wright C.V.E."/>
        </authorList>
    </citation>
    <scope>FUNCTION</scope>
</reference>
<reference evidence="18" key="4">
    <citation type="journal article" date="1999" name="Development">
        <title>Xenopus nodal-related signaling is essential for mesendodermal patterning during early embryogenesis.</title>
        <authorList>
            <person name="Osada S."/>
            <person name="Wright C.V.E."/>
        </authorList>
    </citation>
    <scope>FUNCTION</scope>
    <scope>INDUCTION</scope>
</reference>
<reference evidence="18" key="5">
    <citation type="journal article" date="1999" name="Nature">
        <title>The head inducer Cerberus is a multifunctional antagonist of Nodal, BMP and Wnt signals.</title>
        <authorList>
            <person name="Piccolo S."/>
            <person name="Agius E."/>
            <person name="Leyns L."/>
            <person name="Bhattacharyya S."/>
            <person name="Grunz H."/>
            <person name="Bouwmeester T."/>
            <person name="De Robertis E.M."/>
        </authorList>
    </citation>
    <scope>INTERACTION WITH CER1</scope>
</reference>
<reference evidence="18" key="6">
    <citation type="journal article" date="2000" name="Development">
        <title>Regulation of the early expression of the Xenopus nodal-related 1 gene, Xnr1.</title>
        <authorList>
            <person name="Hyde C.E."/>
            <person name="Old R.W."/>
        </authorList>
    </citation>
    <scope>TISSUE SPECIFICITY</scope>
    <scope>INDUCTION</scope>
</reference>
<reference evidence="18" key="7">
    <citation type="journal article" date="2000" name="Development">
        <title>Activin/nodal responsiveness and asymmetric expression of a Xenopus nodal-related gene converge on a FAST-regulated module in intron 1.</title>
        <authorList>
            <person name="Osada S."/>
            <person name="Saijoh Y."/>
            <person name="Frisch A."/>
            <person name="Yeo C.-Y."/>
            <person name="Adachi H."/>
            <person name="Watanabe M."/>
            <person name="Whitman M."/>
            <person name="Hamada H."/>
            <person name="Wright C.V.E."/>
        </authorList>
    </citation>
    <scope>TISSUE SPECIFICITY</scope>
    <scope>INDUCTION</scope>
</reference>
<reference evidence="18" key="8">
    <citation type="journal article" date="2003" name="Dev. Biol.">
        <title>Molecular link in the sequential induction of the Spemann organizer: direct activation of the cerberus gene by Xlim-1, Xotx2, Mix.1, and Siamois, immediately downstream from Nodal and Wnt signaling.</title>
        <authorList>
            <person name="Yamamoto S."/>
            <person name="Hikasa H."/>
            <person name="Ono H."/>
            <person name="Taira M."/>
        </authorList>
    </citation>
    <scope>FUNCTION</scope>
</reference>
<reference evidence="18" key="9">
    <citation type="journal article" date="2003" name="Dev. Biol.">
        <title>Coordination of BMP-3b and cerberus is required for head formation of Xenopus embryos.</title>
        <authorList>
            <person name="Hino J."/>
            <person name="Nishimatsu S."/>
            <person name="Nagai T."/>
            <person name="Matsuo H."/>
            <person name="Kangawa K."/>
            <person name="Nohno T."/>
        </authorList>
    </citation>
    <scope>INTERACTION WITH GDF10</scope>
</reference>
<reference evidence="18" key="10">
    <citation type="journal article" date="2005" name="Int. J. Dev. Biol.">
        <title>Xenopus nodal related-1 is indispensable only for left-right axis determination.</title>
        <authorList>
            <person name="Toyoizumi R."/>
            <person name="Ogasawara T."/>
            <person name="Takeuchi S."/>
            <person name="Mogi K."/>
        </authorList>
    </citation>
    <scope>FUNCTION</scope>
    <scope>INDUCTION</scope>
</reference>
<reference evidence="18" key="11">
    <citation type="journal article" date="2007" name="Dev. Biol.">
        <title>Anteriorward shifting of asymmetric Xnr1 expression and contralateral communication in left-right specification in Xenopus.</title>
        <authorList>
            <person name="Ohi Y."/>
            <person name="Wright C.V.E."/>
        </authorList>
    </citation>
    <scope>FUNCTION</scope>
    <scope>TISSUE SPECIFICITY</scope>
    <scope>INDUCTION</scope>
</reference>
<reference evidence="18" key="12">
    <citation type="journal article" date="2007" name="Dev. Biol.">
        <title>Multiple functions of Cerberus cooperate to induce heart downstream of Nodal.</title>
        <authorList>
            <person name="Foley A.C."/>
            <person name="Korol O."/>
            <person name="Timmer A.M."/>
            <person name="Mercola M."/>
        </authorList>
    </citation>
    <scope>FUNCTION</scope>
</reference>
<gene>
    <name evidence="2" type="primary">nodal</name>
    <name evidence="17" type="synonym">nr1</name>
</gene>
<name>NODAL_XENLA</name>
<sequence>MAFLTAVLYLGFACISQGLPTWPDRVESRNPLFGSRVALNLPSLLDGNRHHRDMRYPLYMMQLYQNLVTGNDTGLANRPNTATKEYDTVLSLFAKKCTESENRWTLSFDMSAVSRSNELKLAELRILLPHTEPSHNITMDMYHSRDGEDNLYLGSFNANPPSTKGSPWKVFNVTKILQPYFKERRDIDSEHLKAKERAERGSGMSNAEFIDAPGPSQQYNPHQTSVPTYLNTKGVMLVLFTKVKSSANHIGFPSLIKTAESSKYVDIEKASRVPGIRRHRRNRNENHHLSIGSIPSRHVENGKPLCRRVDMIVDFEDIGWSSWIVYPKKYNAYRCEGACPIPLNETFKPTNHAYMKSVVKLYQPERVECPLCVPVKMSPLSMLYYEGDEVVLRHHQEMIVEECGCS</sequence>
<proteinExistence type="evidence at protein level"/>
<dbReference type="EMBL" id="U29447">
    <property type="protein sequence ID" value="AAA97392.1"/>
    <property type="molecule type" value="mRNA"/>
</dbReference>
<dbReference type="EMBL" id="AF410903">
    <property type="protein sequence ID" value="AAL05845.1"/>
    <property type="molecule type" value="Genomic_DNA"/>
</dbReference>
<dbReference type="EMBL" id="AF410904">
    <property type="protein sequence ID" value="AAL05846.1"/>
    <property type="molecule type" value="Genomic_DNA"/>
</dbReference>
<dbReference type="RefSeq" id="NP_001079265.1">
    <property type="nucleotide sequence ID" value="NM_001085796.1"/>
</dbReference>
<dbReference type="GlyCosmos" id="Q91619">
    <property type="glycosylation" value="4 sites, No reported glycans"/>
</dbReference>
<dbReference type="GeneID" id="378543"/>
<dbReference type="KEGG" id="xla:378543"/>
<dbReference type="AGR" id="Xenbase:XB-GENE-865681"/>
<dbReference type="CTD" id="378543"/>
<dbReference type="Xenbase" id="XB-GENE-865681">
    <property type="gene designation" value="nodal1.L"/>
</dbReference>
<dbReference type="OMA" id="HTEPSHN"/>
<dbReference type="OrthoDB" id="5949851at2759"/>
<dbReference type="Proteomes" id="UP000186698">
    <property type="component" value="Chromosome 3L"/>
</dbReference>
<dbReference type="Bgee" id="378543">
    <property type="expression patterns" value="Expressed in gastrula and 2 other cell types or tissues"/>
</dbReference>
<dbReference type="GO" id="GO:0005576">
    <property type="term" value="C:extracellular region"/>
    <property type="evidence" value="ECO:0000304"/>
    <property type="project" value="Reactome"/>
</dbReference>
<dbReference type="GO" id="GO:0005615">
    <property type="term" value="C:extracellular space"/>
    <property type="evidence" value="ECO:0000318"/>
    <property type="project" value="GO_Central"/>
</dbReference>
<dbReference type="GO" id="GO:0005125">
    <property type="term" value="F:cytokine activity"/>
    <property type="evidence" value="ECO:0000318"/>
    <property type="project" value="GO_Central"/>
</dbReference>
<dbReference type="GO" id="GO:0008083">
    <property type="term" value="F:growth factor activity"/>
    <property type="evidence" value="ECO:0007669"/>
    <property type="project" value="UniProtKB-KW"/>
</dbReference>
<dbReference type="GO" id="GO:0016015">
    <property type="term" value="F:morphogen activity"/>
    <property type="evidence" value="ECO:0000315"/>
    <property type="project" value="BHF-UCL"/>
</dbReference>
<dbReference type="GO" id="GO:0048318">
    <property type="term" value="P:axial mesoderm development"/>
    <property type="evidence" value="ECO:0000315"/>
    <property type="project" value="UniProtKB"/>
</dbReference>
<dbReference type="GO" id="GO:0048320">
    <property type="term" value="P:axial mesoderm formation"/>
    <property type="evidence" value="ECO:0000315"/>
    <property type="project" value="UniProtKB"/>
</dbReference>
<dbReference type="GO" id="GO:0003140">
    <property type="term" value="P:determination of left/right asymmetry in lateral mesoderm"/>
    <property type="evidence" value="ECO:0000315"/>
    <property type="project" value="BHF-UCL"/>
</dbReference>
<dbReference type="GO" id="GO:0007368">
    <property type="term" value="P:determination of left/right symmetry"/>
    <property type="evidence" value="ECO:0000314"/>
    <property type="project" value="UniProtKB"/>
</dbReference>
<dbReference type="GO" id="GO:0007507">
    <property type="term" value="P:heart development"/>
    <property type="evidence" value="ECO:0000315"/>
    <property type="project" value="UniProtKB"/>
</dbReference>
<dbReference type="GO" id="GO:0070986">
    <property type="term" value="P:left/right axis specification"/>
    <property type="evidence" value="ECO:0000315"/>
    <property type="project" value="Xenbase"/>
</dbReference>
<dbReference type="GO" id="GO:0038092">
    <property type="term" value="P:nodal signaling pathway"/>
    <property type="evidence" value="ECO:0000315"/>
    <property type="project" value="BHF-UCL"/>
</dbReference>
<dbReference type="GO" id="GO:0048339">
    <property type="term" value="P:paraxial mesoderm development"/>
    <property type="evidence" value="ECO:0000315"/>
    <property type="project" value="BHF-UCL"/>
</dbReference>
<dbReference type="CDD" id="cd13759">
    <property type="entry name" value="TGF_beta_NODAL"/>
    <property type="match status" value="1"/>
</dbReference>
<dbReference type="FunFam" id="2.10.90.10:FF:000026">
    <property type="entry name" value="Nodal homolog 3-A"/>
    <property type="match status" value="1"/>
</dbReference>
<dbReference type="FunFam" id="2.60.120.970:FF:000040">
    <property type="entry name" value="Nodal homolog 5"/>
    <property type="match status" value="1"/>
</dbReference>
<dbReference type="Gene3D" id="2.60.120.970">
    <property type="match status" value="1"/>
</dbReference>
<dbReference type="Gene3D" id="2.10.90.10">
    <property type="entry name" value="Cystine-knot cytokines"/>
    <property type="match status" value="1"/>
</dbReference>
<dbReference type="InterPro" id="IPR029034">
    <property type="entry name" value="Cystine-knot_cytokine"/>
</dbReference>
<dbReference type="InterPro" id="IPR001839">
    <property type="entry name" value="TGF-b_C"/>
</dbReference>
<dbReference type="InterPro" id="IPR001111">
    <property type="entry name" value="TGF-b_propeptide"/>
</dbReference>
<dbReference type="InterPro" id="IPR015615">
    <property type="entry name" value="TGF-beta-rel"/>
</dbReference>
<dbReference type="InterPro" id="IPR017948">
    <property type="entry name" value="TGFb_CS"/>
</dbReference>
<dbReference type="PANTHER" id="PTHR11848:SF159">
    <property type="entry name" value="NODAL HOMOLOG"/>
    <property type="match status" value="1"/>
</dbReference>
<dbReference type="PANTHER" id="PTHR11848">
    <property type="entry name" value="TGF-BETA FAMILY"/>
    <property type="match status" value="1"/>
</dbReference>
<dbReference type="Pfam" id="PF00019">
    <property type="entry name" value="TGF_beta"/>
    <property type="match status" value="1"/>
</dbReference>
<dbReference type="Pfam" id="PF00688">
    <property type="entry name" value="TGFb_propeptide"/>
    <property type="match status" value="1"/>
</dbReference>
<dbReference type="SMART" id="SM00204">
    <property type="entry name" value="TGFB"/>
    <property type="match status" value="1"/>
</dbReference>
<dbReference type="SUPFAM" id="SSF57501">
    <property type="entry name" value="Cystine-knot cytokines"/>
    <property type="match status" value="1"/>
</dbReference>
<dbReference type="PROSITE" id="PS00250">
    <property type="entry name" value="TGF_BETA_1"/>
    <property type="match status" value="1"/>
</dbReference>
<dbReference type="PROSITE" id="PS51362">
    <property type="entry name" value="TGF_BETA_2"/>
    <property type="match status" value="1"/>
</dbReference>
<feature type="signal peptide" evidence="3">
    <location>
        <begin position="1"/>
        <end position="18"/>
    </location>
</feature>
<feature type="propeptide" id="PRO_0000273274" evidence="3">
    <location>
        <begin position="19"/>
        <end position="281"/>
    </location>
</feature>
<feature type="chain" id="PRO_0000273275" description="Nodal homolog" evidence="3">
    <location>
        <begin position="282"/>
        <end position="406"/>
    </location>
</feature>
<feature type="region of interest" description="Disordered" evidence="4">
    <location>
        <begin position="195"/>
        <end position="222"/>
    </location>
</feature>
<feature type="glycosylation site" description="N-linked (GlcNAc...) asparagine" evidence="3">
    <location>
        <position position="71"/>
    </location>
</feature>
<feature type="glycosylation site" description="N-linked (GlcNAc...) asparagine" evidence="3">
    <location>
        <position position="136"/>
    </location>
</feature>
<feature type="glycosylation site" description="N-linked (GlcNAc...) asparagine" evidence="3">
    <location>
        <position position="172"/>
    </location>
</feature>
<feature type="glycosylation site" description="N-linked (GlcNAc...) asparagine" evidence="3">
    <location>
        <position position="344"/>
    </location>
</feature>
<feature type="disulfide bond" evidence="2">
    <location>
        <begin position="306"/>
        <end position="372"/>
    </location>
</feature>
<feature type="disulfide bond" evidence="2">
    <location>
        <begin position="335"/>
        <end position="403"/>
    </location>
</feature>
<feature type="disulfide bond" evidence="2">
    <location>
        <begin position="339"/>
        <end position="405"/>
    </location>
</feature>
<feature type="disulfide bond" description="Interchain" evidence="2">
    <location>
        <position position="369"/>
    </location>
</feature>
<comment type="function">
    <text evidence="6 10 12 13 14 15 16">Cooperation and regulatory loops of multiple nodals are essential for mesendoderm patterning in early embryos. Essential for mesoderm formation and axial patterning during embryonic development. Activates the activin-like signaling pathway to induce dorsal and ventral mesoderm in animal cap ectoderm. In addition, also dorsalizes ventral marginal zone (VMZ) tissues during gastrulation. Acts in a downstream signaling cascade via cripto and cer1 to mediate cardiogenesis in embryonic mesoderm. Directs the orientation of the left-right axis by driving the left-specific gene cascade in the left lateral plate mesoderm.</text>
</comment>
<comment type="subunit">
    <text evidence="2 5 11">Homodimer; disulfide-linked (By similarity). Interacts with, and is inhibited by cer1 and gdf10/bmp3b.</text>
</comment>
<comment type="subcellular location">
    <subcellularLocation>
        <location evidence="1">Secreted</location>
    </subcellularLocation>
</comment>
<comment type="tissue specificity">
    <text evidence="7 8 13 15">In the first phase of expression, localized to the vegetal region of the blastula. During gastrulation (stage 10.5), this expression disappears and instead becomes localized to the dorsal marginal zone, with enrichment in the organizer. During the second phase of expression in neurulae and tailbud embryos, expression restarts firstly in two symmetric patches near the posterior end of the notochord, and then in a large asymmetrical domain in the left lateral plate mesoderm.</text>
</comment>
<comment type="developmental stage">
    <text evidence="15">Has two phases of temporal expression during embryogenesis; first expressed at late blastula (stage 9) with expression peaking at early gastrula. Expression then disappears before restarting in a second phase in late neurulae (stage 17).</text>
</comment>
<comment type="induction">
    <text evidence="6 7 8 9 12 13 15">By dorsal mesoderm-inducing signals including smad2-smad4, activin and other nodal-related proteins including nodal2/nr-2 and nodal4/nr-4. Shows autoinduction by nodal/nr-1. Induced by vegt, acting in an autoregulatory loop. Beta-catenin potentiates the response to activin. Not induced by wnt8 alone, but wnt8 potentiates the response to activin. Suppressed by ventral inducers such as bmp4.</text>
</comment>
<comment type="similarity">
    <text evidence="3">Belongs to the TGF-beta family.</text>
</comment>
<protein>
    <recommendedName>
        <fullName>Nodal homolog</fullName>
    </recommendedName>
    <alternativeName>
        <fullName>Nodal-related protein 1</fullName>
    </alternativeName>
    <alternativeName>
        <fullName>Xnr-1</fullName>
        <shortName>Xnr1</shortName>
        <shortName>nr-1</shortName>
    </alternativeName>
</protein>